<evidence type="ECO:0000255" key="1"/>
<evidence type="ECO:0000255" key="2">
    <source>
        <dbReference type="PROSITE-ProRule" id="PRU00806"/>
    </source>
</evidence>
<evidence type="ECO:0000305" key="3"/>
<reference key="1">
    <citation type="journal article" date="2000" name="DNA Res.">
        <title>Structural analysis of Arabidopsis thaliana chromosome 3. I. Sequence features of the regions of 4,504,864 bp covered by sixty P1 and TAC clones.</title>
        <authorList>
            <person name="Sato S."/>
            <person name="Nakamura Y."/>
            <person name="Kaneko T."/>
            <person name="Katoh T."/>
            <person name="Asamizu E."/>
            <person name="Tabata S."/>
        </authorList>
    </citation>
    <scope>NUCLEOTIDE SEQUENCE [LARGE SCALE GENOMIC DNA]</scope>
    <source>
        <strain>cv. Columbia</strain>
    </source>
</reference>
<reference key="2">
    <citation type="journal article" date="2017" name="Plant J.">
        <title>Araport11: a complete reannotation of the Arabidopsis thaliana reference genome.</title>
        <authorList>
            <person name="Cheng C.Y."/>
            <person name="Krishnakumar V."/>
            <person name="Chan A.P."/>
            <person name="Thibaud-Nissen F."/>
            <person name="Schobel S."/>
            <person name="Town C.D."/>
        </authorList>
    </citation>
    <scope>GENOME REANNOTATION</scope>
    <source>
        <strain>cv. Columbia</strain>
    </source>
</reference>
<reference key="3">
    <citation type="journal article" date="2001" name="Plant Physiol.">
        <title>A superfamily of proteins with novel cysteine-rich repeats.</title>
        <authorList>
            <person name="Chen Z."/>
        </authorList>
    </citation>
    <scope>GENE FAMILY ORGANIZATION</scope>
    <scope>NOMENCLATURE</scope>
</reference>
<protein>
    <recommendedName>
        <fullName>Putative cysteine-rich repeat secretory protein 23</fullName>
    </recommendedName>
</protein>
<accession>Q9LRL6</accession>
<accession>F4IYW7</accession>
<gene>
    <name type="primary">CRRSP23</name>
    <name type="ordered locus">At3g21945</name>
    <name type="ORF">MZN24.9</name>
</gene>
<organism>
    <name type="scientific">Arabidopsis thaliana</name>
    <name type="common">Mouse-ear cress</name>
    <dbReference type="NCBI Taxonomy" id="3702"/>
    <lineage>
        <taxon>Eukaryota</taxon>
        <taxon>Viridiplantae</taxon>
        <taxon>Streptophyta</taxon>
        <taxon>Embryophyta</taxon>
        <taxon>Tracheophyta</taxon>
        <taxon>Spermatophyta</taxon>
        <taxon>Magnoliopsida</taxon>
        <taxon>eudicotyledons</taxon>
        <taxon>Gunneridae</taxon>
        <taxon>Pentapetalae</taxon>
        <taxon>rosids</taxon>
        <taxon>malvids</taxon>
        <taxon>Brassicales</taxon>
        <taxon>Brassicaceae</taxon>
        <taxon>Camelineae</taxon>
        <taxon>Arabidopsis</taxon>
    </lineage>
</organism>
<dbReference type="EMBL" id="AB028622">
    <property type="protein sequence ID" value="BAB01374.1"/>
    <property type="status" value="ALT_SEQ"/>
    <property type="molecule type" value="Genomic_DNA"/>
</dbReference>
<dbReference type="EMBL" id="CP002686">
    <property type="status" value="NOT_ANNOTATED_CDS"/>
    <property type="molecule type" value="Genomic_DNA"/>
</dbReference>
<dbReference type="SMR" id="Q9LRL6"/>
<dbReference type="STRING" id="3702.Q9LRL6"/>
<dbReference type="PeptideAtlas" id="Q9LRL6"/>
<dbReference type="Araport" id="AT3G21945"/>
<dbReference type="TAIR" id="AT3G21945"/>
<dbReference type="InParanoid" id="Q9LRL6"/>
<dbReference type="Proteomes" id="UP000006548">
    <property type="component" value="Chromosome 3"/>
</dbReference>
<dbReference type="ExpressionAtlas" id="Q9LRL6">
    <property type="expression patterns" value="baseline and differential"/>
</dbReference>
<dbReference type="GO" id="GO:0005576">
    <property type="term" value="C:extracellular region"/>
    <property type="evidence" value="ECO:0007669"/>
    <property type="project" value="UniProtKB-SubCell"/>
</dbReference>
<dbReference type="CDD" id="cd23509">
    <property type="entry name" value="Gnk2-like"/>
    <property type="match status" value="2"/>
</dbReference>
<dbReference type="FunFam" id="3.30.430.20:FF:000002">
    <property type="entry name" value="Cysteine-rich receptor-like protein kinase 10"/>
    <property type="match status" value="1"/>
</dbReference>
<dbReference type="Gene3D" id="3.30.430.20">
    <property type="entry name" value="Gnk2 domain, C-X8-C-X2-C motif"/>
    <property type="match status" value="2"/>
</dbReference>
<dbReference type="InterPro" id="IPR050581">
    <property type="entry name" value="CRR_secretory_protein"/>
</dbReference>
<dbReference type="InterPro" id="IPR002902">
    <property type="entry name" value="GNK2"/>
</dbReference>
<dbReference type="InterPro" id="IPR038408">
    <property type="entry name" value="GNK2_sf"/>
</dbReference>
<dbReference type="PANTHER" id="PTHR32411:SF54">
    <property type="entry name" value="CYSTEINE-RICH REPEAT SECRETORY PROTEIN 29-RELATED"/>
    <property type="match status" value="1"/>
</dbReference>
<dbReference type="PANTHER" id="PTHR32411">
    <property type="entry name" value="CYSTEINE-RICH REPEAT SECRETORY PROTEIN 38-RELATED"/>
    <property type="match status" value="1"/>
</dbReference>
<dbReference type="Pfam" id="PF01657">
    <property type="entry name" value="Stress-antifung"/>
    <property type="match status" value="2"/>
</dbReference>
<dbReference type="PROSITE" id="PS51473">
    <property type="entry name" value="GNK2"/>
    <property type="match status" value="2"/>
</dbReference>
<name>CRR23_ARATH</name>
<keyword id="KW-1185">Reference proteome</keyword>
<keyword id="KW-0677">Repeat</keyword>
<keyword id="KW-0964">Secreted</keyword>
<keyword id="KW-0732">Signal</keyword>
<feature type="signal peptide" evidence="1">
    <location>
        <begin position="1"/>
        <end position="31"/>
    </location>
</feature>
<feature type="chain" id="PRO_0000296151" description="Putative cysteine-rich repeat secretory protein 23">
    <location>
        <begin position="32"/>
        <end position="260"/>
    </location>
</feature>
<feature type="domain" description="Gnk2-homologous 1" evidence="2">
    <location>
        <begin position="38"/>
        <end position="136"/>
    </location>
</feature>
<feature type="domain" description="Gnk2-homologous 2" evidence="2">
    <location>
        <begin position="142"/>
        <end position="254"/>
    </location>
</feature>
<comment type="subcellular location">
    <subcellularLocation>
        <location evidence="3">Secreted</location>
    </subcellularLocation>
</comment>
<comment type="similarity">
    <text evidence="3">Belongs to the cysteine-rich repeat secretory protein family.</text>
</comment>
<comment type="caution">
    <text evidence="3">Could be the product of a pseudogene.</text>
</comment>
<comment type="sequence caution" evidence="3">
    <conflict type="erroneous gene model prediction">
        <sequence resource="EMBL-CDS" id="BAB01374"/>
    </conflict>
</comment>
<comment type="sequence caution" evidence="3">
    <conflict type="frameshift">
        <sequence resource="EMBL-CDS" id="BAB01374"/>
    </conflict>
</comment>
<sequence length="260" mass="29577">MSSSFVYKSLFLVPILAVVAMQLSFVQSVLSLNQTNEYLHHLCLNRQGTYESGSKYARDLNNLIQMISISILGDVVVFSGDNSIYVKLQCRGDSSTSTCRSCLDTAFSGVSRRCLNNKGRIIWYDNCVLTISNISYVWRDRLPEQFLYFNAKDVSGDAKSFNEKTRTLLYKLKEKASSKENIPNKKNYLYATGEESLGKMKLYAMVQCTQDLSIKNCNVCLNWILGKLPKCCNDKQGGRFLSTSCNFRYELYLFVKLTTI</sequence>
<proteinExistence type="uncertain"/>